<keyword id="KW-1003">Cell membrane</keyword>
<keyword id="KW-0446">Lipid-binding</keyword>
<keyword id="KW-0472">Membrane</keyword>
<keyword id="KW-1267">Proteomics identification</keyword>
<keyword id="KW-1185">Reference proteome</keyword>
<keyword id="KW-0879">Wnt signaling pathway</keyword>
<organism>
    <name type="scientific">Homo sapiens</name>
    <name type="common">Human</name>
    <dbReference type="NCBI Taxonomy" id="9606"/>
    <lineage>
        <taxon>Eukaryota</taxon>
        <taxon>Metazoa</taxon>
        <taxon>Chordata</taxon>
        <taxon>Craniata</taxon>
        <taxon>Vertebrata</taxon>
        <taxon>Euteleostomi</taxon>
        <taxon>Mammalia</taxon>
        <taxon>Eutheria</taxon>
        <taxon>Euarchontoglires</taxon>
        <taxon>Primates</taxon>
        <taxon>Haplorrhini</taxon>
        <taxon>Catarrhini</taxon>
        <taxon>Hominidae</taxon>
        <taxon>Homo</taxon>
    </lineage>
</organism>
<proteinExistence type="evidence at protein level"/>
<gene>
    <name type="primary">AMER3</name>
    <name type="synonym">FAM123C</name>
</gene>
<accession>Q8N944</accession>
<accession>B7ZLH6</accession>
<name>AMER3_HUMAN</name>
<dbReference type="EMBL" id="AK095696">
    <property type="protein sequence ID" value="BAC04612.1"/>
    <property type="molecule type" value="mRNA"/>
</dbReference>
<dbReference type="EMBL" id="AK289525">
    <property type="protein sequence ID" value="BAF82214.1"/>
    <property type="molecule type" value="mRNA"/>
</dbReference>
<dbReference type="EMBL" id="AK291424">
    <property type="protein sequence ID" value="BAF84113.1"/>
    <property type="molecule type" value="mRNA"/>
</dbReference>
<dbReference type="EMBL" id="AC010984">
    <property type="protein sequence ID" value="AAY24355.1"/>
    <property type="molecule type" value="Genomic_DNA"/>
</dbReference>
<dbReference type="EMBL" id="AC140481">
    <property type="status" value="NOT_ANNOTATED_CDS"/>
    <property type="molecule type" value="Genomic_DNA"/>
</dbReference>
<dbReference type="EMBL" id="CH471250">
    <property type="protein sequence ID" value="EAW51273.1"/>
    <property type="molecule type" value="Genomic_DNA"/>
</dbReference>
<dbReference type="EMBL" id="BC113445">
    <property type="protein sequence ID" value="AAI13446.1"/>
    <property type="molecule type" value="mRNA"/>
</dbReference>
<dbReference type="EMBL" id="BC113447">
    <property type="protein sequence ID" value="AAI13448.1"/>
    <property type="molecule type" value="mRNA"/>
</dbReference>
<dbReference type="EMBL" id="BC143806">
    <property type="protein sequence ID" value="AAI43807.1"/>
    <property type="molecule type" value="mRNA"/>
</dbReference>
<dbReference type="CCDS" id="CCDS2164.1"/>
<dbReference type="RefSeq" id="NP_001098663.1">
    <property type="nucleotide sequence ID" value="NM_001105193.2"/>
</dbReference>
<dbReference type="RefSeq" id="NP_001098664.1">
    <property type="nucleotide sequence ID" value="NM_001105194.2"/>
</dbReference>
<dbReference type="RefSeq" id="NP_001098665.1">
    <property type="nucleotide sequence ID" value="NM_001105195.2"/>
</dbReference>
<dbReference type="RefSeq" id="NP_689911.2">
    <property type="nucleotide sequence ID" value="NM_152698.3"/>
</dbReference>
<dbReference type="RefSeq" id="XP_011509095.1">
    <property type="nucleotide sequence ID" value="XM_011510793.3"/>
</dbReference>
<dbReference type="BioGRID" id="128492">
    <property type="interactions" value="1"/>
</dbReference>
<dbReference type="FunCoup" id="Q8N944">
    <property type="interactions" value="492"/>
</dbReference>
<dbReference type="IntAct" id="Q8N944">
    <property type="interactions" value="4"/>
</dbReference>
<dbReference type="MINT" id="Q8N944"/>
<dbReference type="STRING" id="9606.ENSP00000392700"/>
<dbReference type="GlyGen" id="Q8N944">
    <property type="glycosylation" value="4 sites, 1 O-linked glycan (2 sites)"/>
</dbReference>
<dbReference type="iPTMnet" id="Q8N944"/>
<dbReference type="PhosphoSitePlus" id="Q8N944"/>
<dbReference type="BioMuta" id="AMER3"/>
<dbReference type="DMDM" id="311033381"/>
<dbReference type="MassIVE" id="Q8N944"/>
<dbReference type="PaxDb" id="9606-ENSP00000392700"/>
<dbReference type="PeptideAtlas" id="Q8N944"/>
<dbReference type="ProteomicsDB" id="72485"/>
<dbReference type="Antibodypedia" id="50181">
    <property type="antibodies" value="14 antibodies from 7 providers"/>
</dbReference>
<dbReference type="DNASU" id="205147"/>
<dbReference type="Ensembl" id="ENST00000321420.5">
    <property type="protein sequence ID" value="ENSP00000314914.4"/>
    <property type="gene ID" value="ENSG00000178171.12"/>
</dbReference>
<dbReference type="Ensembl" id="ENST00000431758.2">
    <property type="protein sequence ID" value="ENSP00000410421.2"/>
    <property type="gene ID" value="ENSG00000178171.12"/>
</dbReference>
<dbReference type="Ensembl" id="ENST00000458606.6">
    <property type="protein sequence ID" value="ENSP00000389242.2"/>
    <property type="gene ID" value="ENSG00000178171.12"/>
</dbReference>
<dbReference type="GeneID" id="205147"/>
<dbReference type="KEGG" id="hsa:205147"/>
<dbReference type="MANE-Select" id="ENST00000321420.5">
    <property type="protein sequence ID" value="ENSP00000314914.4"/>
    <property type="RefSeq nucleotide sequence ID" value="NM_152698.3"/>
    <property type="RefSeq protein sequence ID" value="NP_689911.2"/>
</dbReference>
<dbReference type="UCSC" id="uc002trw.3">
    <property type="organism name" value="human"/>
</dbReference>
<dbReference type="AGR" id="HGNC:26771"/>
<dbReference type="CTD" id="205147"/>
<dbReference type="DisGeNET" id="205147"/>
<dbReference type="GeneCards" id="AMER3"/>
<dbReference type="HGNC" id="HGNC:26771">
    <property type="gene designation" value="AMER3"/>
</dbReference>
<dbReference type="HPA" id="ENSG00000178171">
    <property type="expression patterns" value="Tissue enhanced (brain, retina)"/>
</dbReference>
<dbReference type="neXtProt" id="NX_Q8N944"/>
<dbReference type="OpenTargets" id="ENSG00000178171"/>
<dbReference type="PharmGKB" id="PA162385791"/>
<dbReference type="VEuPathDB" id="HostDB:ENSG00000178171"/>
<dbReference type="eggNOG" id="ENOG502QVAK">
    <property type="taxonomic scope" value="Eukaryota"/>
</dbReference>
<dbReference type="GeneTree" id="ENSGT00530000063529"/>
<dbReference type="HOGENOM" id="CLU_011805_0_0_1"/>
<dbReference type="InParanoid" id="Q8N944"/>
<dbReference type="OMA" id="GAPLSMC"/>
<dbReference type="OrthoDB" id="9412224at2759"/>
<dbReference type="PAN-GO" id="Q8N944">
    <property type="GO annotations" value="4 GO annotations based on evolutionary models"/>
</dbReference>
<dbReference type="PhylomeDB" id="Q8N944"/>
<dbReference type="TreeFam" id="TF333006"/>
<dbReference type="PathwayCommons" id="Q8N944"/>
<dbReference type="SignaLink" id="Q8N944"/>
<dbReference type="BioGRID-ORCS" id="205147">
    <property type="hits" value="18 hits in 1143 CRISPR screens"/>
</dbReference>
<dbReference type="GenomeRNAi" id="205147"/>
<dbReference type="Pharos" id="Q8N944">
    <property type="development level" value="Tdark"/>
</dbReference>
<dbReference type="PRO" id="PR:Q8N944"/>
<dbReference type="Proteomes" id="UP000005640">
    <property type="component" value="Chromosome 2"/>
</dbReference>
<dbReference type="RNAct" id="Q8N944">
    <property type="molecule type" value="protein"/>
</dbReference>
<dbReference type="Bgee" id="ENSG00000178171">
    <property type="expression patterns" value="Expressed in cortical plate and 53 other cell types or tissues"/>
</dbReference>
<dbReference type="ExpressionAtlas" id="Q8N944">
    <property type="expression patterns" value="baseline and differential"/>
</dbReference>
<dbReference type="GO" id="GO:0005886">
    <property type="term" value="C:plasma membrane"/>
    <property type="evidence" value="ECO:0000318"/>
    <property type="project" value="GO_Central"/>
</dbReference>
<dbReference type="GO" id="GO:0008013">
    <property type="term" value="F:beta-catenin binding"/>
    <property type="evidence" value="ECO:0000318"/>
    <property type="project" value="GO_Central"/>
</dbReference>
<dbReference type="GO" id="GO:0005546">
    <property type="term" value="F:phosphatidylinositol-4,5-bisphosphate binding"/>
    <property type="evidence" value="ECO:0000318"/>
    <property type="project" value="GO_Central"/>
</dbReference>
<dbReference type="GO" id="GO:0060828">
    <property type="term" value="P:regulation of canonical Wnt signaling pathway"/>
    <property type="evidence" value="ECO:0000318"/>
    <property type="project" value="GO_Central"/>
</dbReference>
<dbReference type="GO" id="GO:0016055">
    <property type="term" value="P:Wnt signaling pathway"/>
    <property type="evidence" value="ECO:0007669"/>
    <property type="project" value="UniProtKB-KW"/>
</dbReference>
<dbReference type="InterPro" id="IPR019003">
    <property type="entry name" value="AMER"/>
</dbReference>
<dbReference type="PANTHER" id="PTHR22237">
    <property type="entry name" value="APC MEMBRANE RECRUITMENT PROTEIN 2-RELATED"/>
    <property type="match status" value="1"/>
</dbReference>
<dbReference type="PANTHER" id="PTHR22237:SF2">
    <property type="entry name" value="APC MEMBRANE RECRUITMENT PROTEIN 3"/>
    <property type="match status" value="1"/>
</dbReference>
<dbReference type="Pfam" id="PF09422">
    <property type="entry name" value="AMER"/>
    <property type="match status" value="2"/>
</dbReference>
<feature type="chain" id="PRO_0000320594" description="APC membrane recruitment protein 3">
    <location>
        <begin position="1"/>
        <end position="861"/>
    </location>
</feature>
<feature type="region of interest" description="Disordered" evidence="2">
    <location>
        <begin position="1"/>
        <end position="77"/>
    </location>
</feature>
<feature type="region of interest" description="Disordered" evidence="2">
    <location>
        <begin position="179"/>
        <end position="206"/>
    </location>
</feature>
<feature type="region of interest" description="Disordered" evidence="2">
    <location>
        <begin position="261"/>
        <end position="289"/>
    </location>
</feature>
<feature type="region of interest" description="Disordered" evidence="2">
    <location>
        <begin position="351"/>
        <end position="415"/>
    </location>
</feature>
<feature type="region of interest" description="Disordered" evidence="2">
    <location>
        <begin position="514"/>
        <end position="558"/>
    </location>
</feature>
<feature type="region of interest" description="Disordered" evidence="2">
    <location>
        <begin position="576"/>
        <end position="644"/>
    </location>
</feature>
<feature type="region of interest" description="Disordered" evidence="2">
    <location>
        <begin position="716"/>
        <end position="742"/>
    </location>
</feature>
<feature type="region of interest" description="Disordered" evidence="2">
    <location>
        <begin position="786"/>
        <end position="822"/>
    </location>
</feature>
<feature type="compositionally biased region" description="Polar residues" evidence="2">
    <location>
        <begin position="362"/>
        <end position="384"/>
    </location>
</feature>
<feature type="compositionally biased region" description="Pro residues" evidence="2">
    <location>
        <begin position="518"/>
        <end position="530"/>
    </location>
</feature>
<feature type="compositionally biased region" description="Low complexity" evidence="2">
    <location>
        <begin position="584"/>
        <end position="595"/>
    </location>
</feature>
<feature type="compositionally biased region" description="Basic and acidic residues" evidence="2">
    <location>
        <begin position="598"/>
        <end position="609"/>
    </location>
</feature>
<feature type="compositionally biased region" description="Polar residues" evidence="2">
    <location>
        <begin position="615"/>
        <end position="629"/>
    </location>
</feature>
<feature type="compositionally biased region" description="Polar residues" evidence="2">
    <location>
        <begin position="719"/>
        <end position="730"/>
    </location>
</feature>
<feature type="sequence variant" id="VAR_039218" description="In dbSNP:rs1905235." evidence="3 4 5">
    <original>S</original>
    <variation>P</variation>
    <location>
        <position position="340"/>
    </location>
</feature>
<protein>
    <recommendedName>
        <fullName>APC membrane recruitment protein 3</fullName>
        <shortName>Amer3</shortName>
    </recommendedName>
    <alternativeName>
        <fullName>Protein FAM123C</fullName>
    </alternativeName>
</protein>
<sequence length="861" mass="90445">MELKRGKTFIKSSLQVSHEKPPDPAAVAAAREGTGPWSVLPGGQQRPHSEKGPQASPSAQEYDRCPNKGAQLDPKGGPAALCGATFKPVRKCKTHDSMSGAGRATAATGQLVGSASFPGSPGSRRMIDYRHFVPQMPFVPAVAKSIPRKRISLKRPKKCFRNLFHIRRNKTEDLASLAAEGKSLPSPGDPSDPGGRRSKAFLPPGEGPGLDGLCQDLLDSELLADASFGLCRALCEDVASLQSFDSLTGCGEVFADESSVPSLELNEGPESPTQAAQGLESKVPRGPLQGSVEQLASPAQNEASDFTRFWDSVNRSVRQQQRALLGPWLSGPQGTDRDQSRLDTAGLAELPLCPCRDPRSGSKASSIDTGTPKSEQPESVSTSDEGYYDSFSPGLEEDKKEAESPGTPAATFPRDSYSGDALYELFHDPSEGPLGPSPDDDLCVSESLSGPALGTPLSICSFRVGAEENLAPAPGPDLLSQGFLQSSWKGKECLLKLCDTELAITMGIVSWLRRGPTPRAPPTPGQPAAPPGSQGAPRAPTEKLGGREGLASDAGGATVCSAPSRQELWAHPGTTGLLAGESKALGGATQGTGTLSRDASREEETRGHSEGLFSSMESAATSTTDTSGKNKAPVPSTWPCSQKEPGPPGVLGCFRGPWRPGHGGDTLDAEPMLAGCVARVAALKISSNEQPPAAWPPRQDMGSGLFGQRWARGPDMLEQKQSSSSPSMTTIHGLPYSASTQDQRCRDRVQDLSWLRVEPTGLGVQAWASVEDQPLQLSTEAVEQVAHGSQLDSEPRSAPAARWSSQGHHPESLGLTLNSQQEGGVSASAPECRCSLLAREGLLCGQPEVGASGPAMAEPHL</sequence>
<comment type="function">
    <text evidence="1">Regulator of the canonical Wnt signaling pathway. Acts by specifically binding phosphatidylinositol 4,5-bisphosphate (PtdIns(4,5)P2), translocating to the cell membrane (By similarity).</text>
</comment>
<comment type="interaction">
    <interactant intactId="EBI-8869590">
        <id>Q8N944</id>
    </interactant>
    <interactant intactId="EBI-6169747">
        <id>Q5JTC6</id>
        <label>AMER1</label>
    </interactant>
    <organismsDiffer>false</organismsDiffer>
    <experiments>4</experiments>
</comment>
<comment type="interaction">
    <interactant intactId="EBI-8869590">
        <id>Q8N944</id>
    </interactant>
    <interactant intactId="EBI-727707">
        <id>P25054</id>
        <label>APC</label>
    </interactant>
    <organismsDiffer>false</organismsDiffer>
    <experiments>8</experiments>
</comment>
<comment type="interaction">
    <interactant intactId="EBI-8869590">
        <id>Q8N944</id>
    </interactant>
    <interactant intactId="EBI-4400025">
        <id>Q9Y2T1</id>
        <label>AXIN2</label>
    </interactant>
    <organismsDiffer>false</organismsDiffer>
    <experiments>2</experiments>
</comment>
<comment type="interaction">
    <interactant intactId="EBI-8869590">
        <id>Q8N944</id>
    </interactant>
    <interactant intactId="EBI-7690990">
        <id>O88566</id>
        <label>Axin2</label>
    </interactant>
    <organismsDiffer>true</organismsDiffer>
    <experiments>2</experiments>
</comment>
<comment type="subcellular location">
    <subcellularLocation>
        <location evidence="1">Cell membrane</location>
        <topology evidence="1">Peripheral membrane protein</topology>
    </subcellularLocation>
    <text evidence="1">Translocates to the cell membrane following binding to PtdIns(4,5)P2.</text>
</comment>
<comment type="similarity">
    <text evidence="6">Belongs to the Amer family.</text>
</comment>
<reference key="1">
    <citation type="journal article" date="2004" name="Nat. Genet.">
        <title>Complete sequencing and characterization of 21,243 full-length human cDNAs.</title>
        <authorList>
            <person name="Ota T."/>
            <person name="Suzuki Y."/>
            <person name="Nishikawa T."/>
            <person name="Otsuki T."/>
            <person name="Sugiyama T."/>
            <person name="Irie R."/>
            <person name="Wakamatsu A."/>
            <person name="Hayashi K."/>
            <person name="Sato H."/>
            <person name="Nagai K."/>
            <person name="Kimura K."/>
            <person name="Makita H."/>
            <person name="Sekine M."/>
            <person name="Obayashi M."/>
            <person name="Nishi T."/>
            <person name="Shibahara T."/>
            <person name="Tanaka T."/>
            <person name="Ishii S."/>
            <person name="Yamamoto J."/>
            <person name="Saito K."/>
            <person name="Kawai Y."/>
            <person name="Isono Y."/>
            <person name="Nakamura Y."/>
            <person name="Nagahari K."/>
            <person name="Murakami K."/>
            <person name="Yasuda T."/>
            <person name="Iwayanagi T."/>
            <person name="Wagatsuma M."/>
            <person name="Shiratori A."/>
            <person name="Sudo H."/>
            <person name="Hosoiri T."/>
            <person name="Kaku Y."/>
            <person name="Kodaira H."/>
            <person name="Kondo H."/>
            <person name="Sugawara M."/>
            <person name="Takahashi M."/>
            <person name="Kanda K."/>
            <person name="Yokoi T."/>
            <person name="Furuya T."/>
            <person name="Kikkawa E."/>
            <person name="Omura Y."/>
            <person name="Abe K."/>
            <person name="Kamihara K."/>
            <person name="Katsuta N."/>
            <person name="Sato K."/>
            <person name="Tanikawa M."/>
            <person name="Yamazaki M."/>
            <person name="Ninomiya K."/>
            <person name="Ishibashi T."/>
            <person name="Yamashita H."/>
            <person name="Murakawa K."/>
            <person name="Fujimori K."/>
            <person name="Tanai H."/>
            <person name="Kimata M."/>
            <person name="Watanabe M."/>
            <person name="Hiraoka S."/>
            <person name="Chiba Y."/>
            <person name="Ishida S."/>
            <person name="Ono Y."/>
            <person name="Takiguchi S."/>
            <person name="Watanabe S."/>
            <person name="Yosida M."/>
            <person name="Hotuta T."/>
            <person name="Kusano J."/>
            <person name="Kanehori K."/>
            <person name="Takahashi-Fujii A."/>
            <person name="Hara H."/>
            <person name="Tanase T.-O."/>
            <person name="Nomura Y."/>
            <person name="Togiya S."/>
            <person name="Komai F."/>
            <person name="Hara R."/>
            <person name="Takeuchi K."/>
            <person name="Arita M."/>
            <person name="Imose N."/>
            <person name="Musashino K."/>
            <person name="Yuuki H."/>
            <person name="Oshima A."/>
            <person name="Sasaki N."/>
            <person name="Aotsuka S."/>
            <person name="Yoshikawa Y."/>
            <person name="Matsunawa H."/>
            <person name="Ichihara T."/>
            <person name="Shiohata N."/>
            <person name="Sano S."/>
            <person name="Moriya S."/>
            <person name="Momiyama H."/>
            <person name="Satoh N."/>
            <person name="Takami S."/>
            <person name="Terashima Y."/>
            <person name="Suzuki O."/>
            <person name="Nakagawa S."/>
            <person name="Senoh A."/>
            <person name="Mizoguchi H."/>
            <person name="Goto Y."/>
            <person name="Shimizu F."/>
            <person name="Wakebe H."/>
            <person name="Hishigaki H."/>
            <person name="Watanabe T."/>
            <person name="Sugiyama A."/>
            <person name="Takemoto M."/>
            <person name="Kawakami B."/>
            <person name="Yamazaki M."/>
            <person name="Watanabe K."/>
            <person name="Kumagai A."/>
            <person name="Itakura S."/>
            <person name="Fukuzumi Y."/>
            <person name="Fujimori Y."/>
            <person name="Komiyama M."/>
            <person name="Tashiro H."/>
            <person name="Tanigami A."/>
            <person name="Fujiwara T."/>
            <person name="Ono T."/>
            <person name="Yamada K."/>
            <person name="Fujii Y."/>
            <person name="Ozaki K."/>
            <person name="Hirao M."/>
            <person name="Ohmori Y."/>
            <person name="Kawabata A."/>
            <person name="Hikiji T."/>
            <person name="Kobatake N."/>
            <person name="Inagaki H."/>
            <person name="Ikema Y."/>
            <person name="Okamoto S."/>
            <person name="Okitani R."/>
            <person name="Kawakami T."/>
            <person name="Noguchi S."/>
            <person name="Itoh T."/>
            <person name="Shigeta K."/>
            <person name="Senba T."/>
            <person name="Matsumura K."/>
            <person name="Nakajima Y."/>
            <person name="Mizuno T."/>
            <person name="Morinaga M."/>
            <person name="Sasaki M."/>
            <person name="Togashi T."/>
            <person name="Oyama M."/>
            <person name="Hata H."/>
            <person name="Watanabe M."/>
            <person name="Komatsu T."/>
            <person name="Mizushima-Sugano J."/>
            <person name="Satoh T."/>
            <person name="Shirai Y."/>
            <person name="Takahashi Y."/>
            <person name="Nakagawa K."/>
            <person name="Okumura K."/>
            <person name="Nagase T."/>
            <person name="Nomura N."/>
            <person name="Kikuchi H."/>
            <person name="Masuho Y."/>
            <person name="Yamashita R."/>
            <person name="Nakai K."/>
            <person name="Yada T."/>
            <person name="Nakamura Y."/>
            <person name="Ohara O."/>
            <person name="Isogai T."/>
            <person name="Sugano S."/>
        </authorList>
    </citation>
    <scope>NUCLEOTIDE SEQUENCE [LARGE SCALE MRNA]</scope>
    <scope>VARIANT PRO-340</scope>
    <source>
        <tissue>Brain</tissue>
        <tissue>Cerebellum</tissue>
    </source>
</reference>
<reference key="2">
    <citation type="journal article" date="2005" name="Nature">
        <title>Generation and annotation of the DNA sequences of human chromosomes 2 and 4.</title>
        <authorList>
            <person name="Hillier L.W."/>
            <person name="Graves T.A."/>
            <person name="Fulton R.S."/>
            <person name="Fulton L.A."/>
            <person name="Pepin K.H."/>
            <person name="Minx P."/>
            <person name="Wagner-McPherson C."/>
            <person name="Layman D."/>
            <person name="Wylie K."/>
            <person name="Sekhon M."/>
            <person name="Becker M.C."/>
            <person name="Fewell G.A."/>
            <person name="Delehaunty K.D."/>
            <person name="Miner T.L."/>
            <person name="Nash W.E."/>
            <person name="Kremitzki C."/>
            <person name="Oddy L."/>
            <person name="Du H."/>
            <person name="Sun H."/>
            <person name="Bradshaw-Cordum H."/>
            <person name="Ali J."/>
            <person name="Carter J."/>
            <person name="Cordes M."/>
            <person name="Harris A."/>
            <person name="Isak A."/>
            <person name="van Brunt A."/>
            <person name="Nguyen C."/>
            <person name="Du F."/>
            <person name="Courtney L."/>
            <person name="Kalicki J."/>
            <person name="Ozersky P."/>
            <person name="Abbott S."/>
            <person name="Armstrong J."/>
            <person name="Belter E.A."/>
            <person name="Caruso L."/>
            <person name="Cedroni M."/>
            <person name="Cotton M."/>
            <person name="Davidson T."/>
            <person name="Desai A."/>
            <person name="Elliott G."/>
            <person name="Erb T."/>
            <person name="Fronick C."/>
            <person name="Gaige T."/>
            <person name="Haakenson W."/>
            <person name="Haglund K."/>
            <person name="Holmes A."/>
            <person name="Harkins R."/>
            <person name="Kim K."/>
            <person name="Kruchowski S.S."/>
            <person name="Strong C.M."/>
            <person name="Grewal N."/>
            <person name="Goyea E."/>
            <person name="Hou S."/>
            <person name="Levy A."/>
            <person name="Martinka S."/>
            <person name="Mead K."/>
            <person name="McLellan M.D."/>
            <person name="Meyer R."/>
            <person name="Randall-Maher J."/>
            <person name="Tomlinson C."/>
            <person name="Dauphin-Kohlberg S."/>
            <person name="Kozlowicz-Reilly A."/>
            <person name="Shah N."/>
            <person name="Swearengen-Shahid S."/>
            <person name="Snider J."/>
            <person name="Strong J.T."/>
            <person name="Thompson J."/>
            <person name="Yoakum M."/>
            <person name="Leonard S."/>
            <person name="Pearman C."/>
            <person name="Trani L."/>
            <person name="Radionenko M."/>
            <person name="Waligorski J.E."/>
            <person name="Wang C."/>
            <person name="Rock S.M."/>
            <person name="Tin-Wollam A.-M."/>
            <person name="Maupin R."/>
            <person name="Latreille P."/>
            <person name="Wendl M.C."/>
            <person name="Yang S.-P."/>
            <person name="Pohl C."/>
            <person name="Wallis J.W."/>
            <person name="Spieth J."/>
            <person name="Bieri T.A."/>
            <person name="Berkowicz N."/>
            <person name="Nelson J.O."/>
            <person name="Osborne J."/>
            <person name="Ding L."/>
            <person name="Meyer R."/>
            <person name="Sabo A."/>
            <person name="Shotland Y."/>
            <person name="Sinha P."/>
            <person name="Wohldmann P.E."/>
            <person name="Cook L.L."/>
            <person name="Hickenbotham M.T."/>
            <person name="Eldred J."/>
            <person name="Williams D."/>
            <person name="Jones T.A."/>
            <person name="She X."/>
            <person name="Ciccarelli F.D."/>
            <person name="Izaurralde E."/>
            <person name="Taylor J."/>
            <person name="Schmutz J."/>
            <person name="Myers R.M."/>
            <person name="Cox D.R."/>
            <person name="Huang X."/>
            <person name="McPherson J.D."/>
            <person name="Mardis E.R."/>
            <person name="Clifton S.W."/>
            <person name="Warren W.C."/>
            <person name="Chinwalla A.T."/>
            <person name="Eddy S.R."/>
            <person name="Marra M.A."/>
            <person name="Ovcharenko I."/>
            <person name="Furey T.S."/>
            <person name="Miller W."/>
            <person name="Eichler E.E."/>
            <person name="Bork P."/>
            <person name="Suyama M."/>
            <person name="Torrents D."/>
            <person name="Waterston R.H."/>
            <person name="Wilson R.K."/>
        </authorList>
    </citation>
    <scope>NUCLEOTIDE SEQUENCE [LARGE SCALE GENOMIC DNA]</scope>
    <scope>VARIANT PRO-340</scope>
</reference>
<reference key="3">
    <citation type="submission" date="2005-07" db="EMBL/GenBank/DDBJ databases">
        <authorList>
            <person name="Mural R.J."/>
            <person name="Istrail S."/>
            <person name="Sutton G.G."/>
            <person name="Florea L."/>
            <person name="Halpern A.L."/>
            <person name="Mobarry C.M."/>
            <person name="Lippert R."/>
            <person name="Walenz B."/>
            <person name="Shatkay H."/>
            <person name="Dew I."/>
            <person name="Miller J.R."/>
            <person name="Flanigan M.J."/>
            <person name="Edwards N.J."/>
            <person name="Bolanos R."/>
            <person name="Fasulo D."/>
            <person name="Halldorsson B.V."/>
            <person name="Hannenhalli S."/>
            <person name="Turner R."/>
            <person name="Yooseph S."/>
            <person name="Lu F."/>
            <person name="Nusskern D.R."/>
            <person name="Shue B.C."/>
            <person name="Zheng X.H."/>
            <person name="Zhong F."/>
            <person name="Delcher A.L."/>
            <person name="Huson D.H."/>
            <person name="Kravitz S.A."/>
            <person name="Mouchard L."/>
            <person name="Reinert K."/>
            <person name="Remington K.A."/>
            <person name="Clark A.G."/>
            <person name="Waterman M.S."/>
            <person name="Eichler E.E."/>
            <person name="Adams M.D."/>
            <person name="Hunkapiller M.W."/>
            <person name="Myers E.W."/>
            <person name="Venter J.C."/>
        </authorList>
    </citation>
    <scope>NUCLEOTIDE SEQUENCE [LARGE SCALE GENOMIC DNA]</scope>
</reference>
<reference key="4">
    <citation type="journal article" date="2004" name="Genome Res.">
        <title>The status, quality, and expansion of the NIH full-length cDNA project: the Mammalian Gene Collection (MGC).</title>
        <authorList>
            <consortium name="The MGC Project Team"/>
        </authorList>
    </citation>
    <scope>NUCLEOTIDE SEQUENCE [LARGE SCALE MRNA]</scope>
    <scope>VARIANT PRO-340</scope>
    <source>
        <tissue>Brain</tissue>
    </source>
</reference>
<evidence type="ECO:0000250" key="1"/>
<evidence type="ECO:0000256" key="2">
    <source>
        <dbReference type="SAM" id="MobiDB-lite"/>
    </source>
</evidence>
<evidence type="ECO:0000269" key="3">
    <source>
    </source>
</evidence>
<evidence type="ECO:0000269" key="4">
    <source>
    </source>
</evidence>
<evidence type="ECO:0000269" key="5">
    <source>
    </source>
</evidence>
<evidence type="ECO:0000305" key="6"/>